<protein>
    <recommendedName>
        <fullName>Serine/threonine-protein kinase chk-2</fullName>
        <ecNumber>2.7.11.1</ecNumber>
    </recommendedName>
    <alternativeName>
        <fullName>Ce-cds-1</fullName>
    </alternativeName>
    <alternativeName>
        <fullName>Ce-chk-2</fullName>
    </alternativeName>
</protein>
<gene>
    <name type="primary">chk-2</name>
    <name type="synonym">cds-1</name>
    <name type="ORF">Y60A3A.12</name>
</gene>
<sequence length="476" mass="53338">MVRGTKRRRSSAEKPIVVVPVTRDDTMPVDEDLVVGESQCAASKPFAKLVGVRRGISSIDLADDHFVCGRGSDDAPTNFNFSQVAKDVGLYRFISKIQFSIDRDTETRRIYLHDHSRNGTLVNQEMIGKGLSRELMNGDLISIGIPALIIFVYESADADHHPEELTKKYHVTSHSLGKGGFGKVLLGYKKSDRSVVAIKQLNTQFSTRCSRAIAKTRDIRNEVEVMKKLSHPNIVAIYDWITVAKYSYMVIEYVGGGEFFSKVVDSKYNRMGLGESLGKYFAFQLIDAILYLHSVGICHRDIKPENILCSDKAERCILKLTDFGMAKNSVNRMKTRCGTPSYNAPEIVANEGVEYTPKVDIWSLGCVLFITFSGYPPFSEEYTDMTMDEQVLTGRLIFHAQWRRITVETQNMIKWMLTVEPSNRPSAVELMSTQWMKCADCRTAKQDILKSIKPISAAAPAALQTTQAGPVKKAKM</sequence>
<reference evidence="8" key="1">
    <citation type="journal article" date="2001" name="Mol. Cell. Biol.">
        <title>Critical role of Caenorhabditis elegans homologs of cds1 (Chk2)-related kinases in meiotic recombination.</title>
        <authorList>
            <person name="Oishi I."/>
            <person name="Iwai K."/>
            <person name="Kagohashi Y."/>
            <person name="Fujimoto H."/>
            <person name="Kariya K."/>
            <person name="Kataoka T."/>
            <person name="Sawa H."/>
            <person name="Okano H."/>
            <person name="Otani H."/>
            <person name="Yamamura H."/>
            <person name="Minami Y."/>
        </authorList>
    </citation>
    <scope>NUCLEOTIDE SEQUENCE [MRNA]</scope>
    <scope>FUNCTION</scope>
    <scope>SUBCELLULAR LOCATION</scope>
</reference>
<reference key="2">
    <citation type="journal article" date="1998" name="Science">
        <title>Genome sequence of the nematode C. elegans: a platform for investigating biology.</title>
        <authorList>
            <consortium name="The C. elegans sequencing consortium"/>
        </authorList>
    </citation>
    <scope>NUCLEOTIDE SEQUENCE [LARGE SCALE GENOMIC DNA]</scope>
    <source>
        <strain>Bristol N2</strain>
    </source>
</reference>
<reference evidence="8" key="3">
    <citation type="journal article" date="2000" name="FEBS Lett.">
        <title>Caenorhabditis elegans Chk2-like gene is essential for meiosis but dispensable for DNA repair.</title>
        <authorList>
            <person name="Higashitani A."/>
            <person name="Aoki H."/>
            <person name="Mori A."/>
            <person name="Sasagawa Y."/>
            <person name="Takanami T."/>
            <person name="Takahashi H."/>
        </authorList>
    </citation>
    <scope>NUCLEOTIDE SEQUENCE [MRNA] OF 10-476</scope>
    <scope>FUNCTION</scope>
    <scope>SUBCELLULAR LOCATION</scope>
    <scope>TISSUE SPECIFICITY</scope>
    <scope>DEVELOPMENTAL STAGE</scope>
    <source>
        <tissue>Gonad</tissue>
    </source>
</reference>
<comment type="function">
    <text evidence="6 7">Serine/threonine-protein kinase which is required for checkpoint-mediated cell cycle arrest, activation of DNA repair and apoptosis in response to the presence of DNA double-strand breaks. May also negatively regulate cell cycle progression during unperturbed cell cycles. Phosphorylates and inhibits cdc25 phosphatase, preventing entry into mitosis. Required for nuclear reorganization and homologous chromosome pairing during meiotic prophase.</text>
</comment>
<comment type="catalytic activity">
    <reaction evidence="2">
        <text>L-seryl-[protein] + ATP = O-phospho-L-seryl-[protein] + ADP + H(+)</text>
        <dbReference type="Rhea" id="RHEA:17989"/>
        <dbReference type="Rhea" id="RHEA-COMP:9863"/>
        <dbReference type="Rhea" id="RHEA-COMP:11604"/>
        <dbReference type="ChEBI" id="CHEBI:15378"/>
        <dbReference type="ChEBI" id="CHEBI:29999"/>
        <dbReference type="ChEBI" id="CHEBI:30616"/>
        <dbReference type="ChEBI" id="CHEBI:83421"/>
        <dbReference type="ChEBI" id="CHEBI:456216"/>
        <dbReference type="EC" id="2.7.11.1"/>
    </reaction>
</comment>
<comment type="catalytic activity">
    <reaction evidence="2">
        <text>L-threonyl-[protein] + ATP = O-phospho-L-threonyl-[protein] + ADP + H(+)</text>
        <dbReference type="Rhea" id="RHEA:46608"/>
        <dbReference type="Rhea" id="RHEA-COMP:11060"/>
        <dbReference type="Rhea" id="RHEA-COMP:11605"/>
        <dbReference type="ChEBI" id="CHEBI:15378"/>
        <dbReference type="ChEBI" id="CHEBI:30013"/>
        <dbReference type="ChEBI" id="CHEBI:30616"/>
        <dbReference type="ChEBI" id="CHEBI:61977"/>
        <dbReference type="ChEBI" id="CHEBI:456216"/>
        <dbReference type="EC" id="2.7.11.1"/>
    </reaction>
</comment>
<comment type="cofactor">
    <cofactor evidence="1">
        <name>Mg(2+)</name>
        <dbReference type="ChEBI" id="CHEBI:18420"/>
    </cofactor>
</comment>
<comment type="subcellular location">
    <subcellularLocation>
        <location evidence="6 7">Nucleus</location>
    </subcellularLocation>
</comment>
<comment type="tissue specificity">
    <text evidence="6">Highly expressed in germline tissue.</text>
</comment>
<comment type="developmental stage">
    <text evidence="6">Low expression in embryos and L2 larvae, high expression in hermaphrodite adults.</text>
</comment>
<comment type="similarity">
    <text evidence="8">Belongs to the protein kinase superfamily. CAMK Ser/Thr protein kinase family. CHK2 subfamily.</text>
</comment>
<comment type="sequence caution" evidence="8">
    <conflict type="erroneous initiation">
        <sequence resource="EMBL-CDS" id="BAB15803"/>
    </conflict>
</comment>
<organism evidence="9">
    <name type="scientific">Caenorhabditis elegans</name>
    <dbReference type="NCBI Taxonomy" id="6239"/>
    <lineage>
        <taxon>Eukaryota</taxon>
        <taxon>Metazoa</taxon>
        <taxon>Ecdysozoa</taxon>
        <taxon>Nematoda</taxon>
        <taxon>Chromadorea</taxon>
        <taxon>Rhabditida</taxon>
        <taxon>Rhabditina</taxon>
        <taxon>Rhabditomorpha</taxon>
        <taxon>Rhabditoidea</taxon>
        <taxon>Rhabditidae</taxon>
        <taxon>Peloderinae</taxon>
        <taxon>Caenorhabditis</taxon>
    </lineage>
</organism>
<name>CHK2_CAEEL</name>
<feature type="chain" id="PRO_0000085860" description="Serine/threonine-protein kinase chk-2">
    <location>
        <begin position="1"/>
        <end position="476"/>
    </location>
</feature>
<feature type="domain" description="FHA" evidence="3 8">
    <location>
        <begin position="66"/>
        <end position="127"/>
    </location>
</feature>
<feature type="domain" description="Protein kinase" evidence="4">
    <location>
        <begin position="170"/>
        <end position="436"/>
    </location>
</feature>
<feature type="active site" description="Proton acceptor" evidence="4 5">
    <location>
        <position position="301"/>
    </location>
</feature>
<feature type="binding site" evidence="4">
    <location>
        <begin position="177"/>
        <end position="184"/>
    </location>
    <ligand>
        <name>ATP</name>
        <dbReference type="ChEBI" id="CHEBI:30616"/>
    </ligand>
</feature>
<feature type="binding site" evidence="4">
    <location>
        <position position="199"/>
    </location>
    <ligand>
        <name>ATP</name>
        <dbReference type="ChEBI" id="CHEBI:30616"/>
    </ligand>
</feature>
<feature type="binding site" evidence="4">
    <location>
        <begin position="252"/>
        <end position="258"/>
    </location>
    <ligand>
        <name>ATP</name>
        <dbReference type="ChEBI" id="CHEBI:30616"/>
    </ligand>
</feature>
<feature type="binding site" evidence="4">
    <location>
        <begin position="305"/>
        <end position="306"/>
    </location>
    <ligand>
        <name>ATP</name>
        <dbReference type="ChEBI" id="CHEBI:30616"/>
    </ligand>
</feature>
<feature type="binding site" evidence="4">
    <location>
        <position position="322"/>
    </location>
    <ligand>
        <name>ATP</name>
        <dbReference type="ChEBI" id="CHEBI:30616"/>
    </ligand>
</feature>
<feature type="sequence conflict" description="In Ref. 3; BAB15803." evidence="8" ref="3">
    <original>SSAE</original>
    <variation>ARRK</variation>
    <location>
        <begin position="10"/>
        <end position="13"/>
    </location>
</feature>
<dbReference type="EC" id="2.7.11.1"/>
<dbReference type="EMBL" id="AB041996">
    <property type="protein sequence ID" value="BAB20578.1"/>
    <property type="molecule type" value="mRNA"/>
</dbReference>
<dbReference type="EMBL" id="AL117207">
    <property type="protein sequence ID" value="CAB60407.2"/>
    <property type="molecule type" value="Genomic_DNA"/>
</dbReference>
<dbReference type="EMBL" id="AB049441">
    <property type="protein sequence ID" value="BAB15803.1"/>
    <property type="status" value="ALT_INIT"/>
    <property type="molecule type" value="mRNA"/>
</dbReference>
<dbReference type="RefSeq" id="NP_001024271.1">
    <property type="nucleotide sequence ID" value="NM_001029100.4"/>
</dbReference>
<dbReference type="SMR" id="Q9U1Y5"/>
<dbReference type="BioGRID" id="45265">
    <property type="interactions" value="5"/>
</dbReference>
<dbReference type="FunCoup" id="Q9U1Y5">
    <property type="interactions" value="1375"/>
</dbReference>
<dbReference type="STRING" id="6239.Y60A3A.12.1"/>
<dbReference type="PaxDb" id="6239-Y60A3A.12"/>
<dbReference type="EnsemblMetazoa" id="Y60A3A.12.1">
    <property type="protein sequence ID" value="Y60A3A.12.1"/>
    <property type="gene ID" value="WBGene00000499"/>
</dbReference>
<dbReference type="GeneID" id="180304"/>
<dbReference type="KEGG" id="cel:CELE_Y60A3A.12"/>
<dbReference type="UCSC" id="Y60A3A.12">
    <property type="organism name" value="c. elegans"/>
</dbReference>
<dbReference type="AGR" id="WB:WBGene00000499"/>
<dbReference type="CTD" id="180304"/>
<dbReference type="WormBase" id="Y60A3A.12">
    <property type="protein sequence ID" value="CE27297"/>
    <property type="gene ID" value="WBGene00000499"/>
    <property type="gene designation" value="chk-2"/>
</dbReference>
<dbReference type="eggNOG" id="KOG0615">
    <property type="taxonomic scope" value="Eukaryota"/>
</dbReference>
<dbReference type="GeneTree" id="ENSGT00800000124190"/>
<dbReference type="HOGENOM" id="CLU_000288_63_47_1"/>
<dbReference type="InParanoid" id="Q9U1Y5"/>
<dbReference type="OMA" id="MLCAVQY"/>
<dbReference type="OrthoDB" id="40902at2759"/>
<dbReference type="PhylomeDB" id="Q9U1Y5"/>
<dbReference type="PRO" id="PR:Q9U1Y5"/>
<dbReference type="Proteomes" id="UP000001940">
    <property type="component" value="Chromosome V"/>
</dbReference>
<dbReference type="Bgee" id="WBGene00000499">
    <property type="expression patterns" value="Expressed in adult organism and 2 other cell types or tissues"/>
</dbReference>
<dbReference type="GO" id="GO:0005737">
    <property type="term" value="C:cytoplasm"/>
    <property type="evidence" value="ECO:0000318"/>
    <property type="project" value="GO_Central"/>
</dbReference>
<dbReference type="GO" id="GO:0005634">
    <property type="term" value="C:nucleus"/>
    <property type="evidence" value="ECO:0000318"/>
    <property type="project" value="GO_Central"/>
</dbReference>
<dbReference type="GO" id="GO:0005524">
    <property type="term" value="F:ATP binding"/>
    <property type="evidence" value="ECO:0007669"/>
    <property type="project" value="UniProtKB-KW"/>
</dbReference>
<dbReference type="GO" id="GO:0046872">
    <property type="term" value="F:metal ion binding"/>
    <property type="evidence" value="ECO:0007669"/>
    <property type="project" value="UniProtKB-KW"/>
</dbReference>
<dbReference type="GO" id="GO:0106310">
    <property type="term" value="F:protein serine kinase activity"/>
    <property type="evidence" value="ECO:0007669"/>
    <property type="project" value="RHEA"/>
</dbReference>
<dbReference type="GO" id="GO:0004674">
    <property type="term" value="F:protein serine/threonine kinase activity"/>
    <property type="evidence" value="ECO:0000318"/>
    <property type="project" value="GO_Central"/>
</dbReference>
<dbReference type="GO" id="GO:0051301">
    <property type="term" value="P:cell division"/>
    <property type="evidence" value="ECO:0007669"/>
    <property type="project" value="UniProtKB-KW"/>
</dbReference>
<dbReference type="GO" id="GO:0006281">
    <property type="term" value="P:DNA repair"/>
    <property type="evidence" value="ECO:0007669"/>
    <property type="project" value="UniProtKB-KW"/>
</dbReference>
<dbReference type="GO" id="GO:0044773">
    <property type="term" value="P:mitotic DNA damage checkpoint signaling"/>
    <property type="evidence" value="ECO:0000318"/>
    <property type="project" value="GO_Central"/>
</dbReference>
<dbReference type="CDD" id="cd22666">
    <property type="entry name" value="FHA_CHK2"/>
    <property type="match status" value="1"/>
</dbReference>
<dbReference type="CDD" id="cd14084">
    <property type="entry name" value="STKc_Chk2"/>
    <property type="match status" value="1"/>
</dbReference>
<dbReference type="FunFam" id="2.60.200.20:FF:000070">
    <property type="entry name" value="Ovarian-specific serine/threonine-protein kinase Lok"/>
    <property type="match status" value="1"/>
</dbReference>
<dbReference type="FunFam" id="1.10.510.10:FF:002646">
    <property type="entry name" value="Serine/threonine-protein kinase chk-2"/>
    <property type="match status" value="1"/>
</dbReference>
<dbReference type="Gene3D" id="2.60.200.20">
    <property type="match status" value="1"/>
</dbReference>
<dbReference type="Gene3D" id="1.10.510.10">
    <property type="entry name" value="Transferase(Phosphotransferase) domain 1"/>
    <property type="match status" value="1"/>
</dbReference>
<dbReference type="InterPro" id="IPR000253">
    <property type="entry name" value="FHA_dom"/>
</dbReference>
<dbReference type="InterPro" id="IPR011009">
    <property type="entry name" value="Kinase-like_dom_sf"/>
</dbReference>
<dbReference type="InterPro" id="IPR000719">
    <property type="entry name" value="Prot_kinase_dom"/>
</dbReference>
<dbReference type="InterPro" id="IPR017441">
    <property type="entry name" value="Protein_kinase_ATP_BS"/>
</dbReference>
<dbReference type="InterPro" id="IPR008271">
    <property type="entry name" value="Ser/Thr_kinase_AS"/>
</dbReference>
<dbReference type="InterPro" id="IPR008984">
    <property type="entry name" value="SMAD_FHA_dom_sf"/>
</dbReference>
<dbReference type="PANTHER" id="PTHR24347">
    <property type="entry name" value="SERINE/THREONINE-PROTEIN KINASE"/>
    <property type="match status" value="1"/>
</dbReference>
<dbReference type="Pfam" id="PF00498">
    <property type="entry name" value="FHA"/>
    <property type="match status" value="1"/>
</dbReference>
<dbReference type="Pfam" id="PF00069">
    <property type="entry name" value="Pkinase"/>
    <property type="match status" value="1"/>
</dbReference>
<dbReference type="SMART" id="SM00220">
    <property type="entry name" value="S_TKc"/>
    <property type="match status" value="1"/>
</dbReference>
<dbReference type="SUPFAM" id="SSF56112">
    <property type="entry name" value="Protein kinase-like (PK-like)"/>
    <property type="match status" value="1"/>
</dbReference>
<dbReference type="SUPFAM" id="SSF49879">
    <property type="entry name" value="SMAD/FHA domain"/>
    <property type="match status" value="1"/>
</dbReference>
<dbReference type="PROSITE" id="PS50006">
    <property type="entry name" value="FHA_DOMAIN"/>
    <property type="match status" value="1"/>
</dbReference>
<dbReference type="PROSITE" id="PS00107">
    <property type="entry name" value="PROTEIN_KINASE_ATP"/>
    <property type="match status" value="1"/>
</dbReference>
<dbReference type="PROSITE" id="PS50011">
    <property type="entry name" value="PROTEIN_KINASE_DOM"/>
    <property type="match status" value="1"/>
</dbReference>
<dbReference type="PROSITE" id="PS00108">
    <property type="entry name" value="PROTEIN_KINASE_ST"/>
    <property type="match status" value="1"/>
</dbReference>
<evidence type="ECO:0000250" key="1"/>
<evidence type="ECO:0000250" key="2">
    <source>
        <dbReference type="UniProtKB" id="P05132"/>
    </source>
</evidence>
<evidence type="ECO:0000255" key="3">
    <source>
        <dbReference type="PROSITE-ProRule" id="PRU00086"/>
    </source>
</evidence>
<evidence type="ECO:0000255" key="4">
    <source>
        <dbReference type="PROSITE-ProRule" id="PRU00159"/>
    </source>
</evidence>
<evidence type="ECO:0000255" key="5">
    <source>
        <dbReference type="PROSITE-ProRule" id="PRU10027"/>
    </source>
</evidence>
<evidence type="ECO:0000269" key="6">
    <source>
    </source>
</evidence>
<evidence type="ECO:0000269" key="7">
    <source>
    </source>
</evidence>
<evidence type="ECO:0000305" key="8"/>
<evidence type="ECO:0000312" key="9">
    <source>
        <dbReference type="EMBL" id="CAB60407.2"/>
    </source>
</evidence>
<keyword id="KW-0067">ATP-binding</keyword>
<keyword id="KW-0131">Cell cycle</keyword>
<keyword id="KW-0132">Cell division</keyword>
<keyword id="KW-0227">DNA damage</keyword>
<keyword id="KW-0234">DNA repair</keyword>
<keyword id="KW-0418">Kinase</keyword>
<keyword id="KW-0460">Magnesium</keyword>
<keyword id="KW-0479">Metal-binding</keyword>
<keyword id="KW-0498">Mitosis</keyword>
<keyword id="KW-0547">Nucleotide-binding</keyword>
<keyword id="KW-0539">Nucleus</keyword>
<keyword id="KW-0597">Phosphoprotein</keyword>
<keyword id="KW-1185">Reference proteome</keyword>
<keyword id="KW-0723">Serine/threonine-protein kinase</keyword>
<keyword id="KW-0808">Transferase</keyword>
<proteinExistence type="evidence at transcript level"/>
<accession>Q9U1Y5</accession>
<accession>Q9GR99</accession>
<accession>Q9GRB8</accession>